<name>DAD2_ARATH</name>
<evidence type="ECO:0000250" key="1"/>
<evidence type="ECO:0000250" key="2">
    <source>
        <dbReference type="UniProtKB" id="P46964"/>
    </source>
</evidence>
<evidence type="ECO:0000255" key="3"/>
<evidence type="ECO:0000303" key="4">
    <source>
    </source>
</evidence>
<evidence type="ECO:0000305" key="5"/>
<gene>
    <name type="primary">DAD2</name>
    <name type="ordered locus">At2g35520</name>
    <name type="ORF">T32F12.10</name>
</gene>
<dbReference type="EMBL" id="AF030172">
    <property type="protein sequence ID" value="AAB86478.1"/>
    <property type="molecule type" value="Genomic_DNA"/>
</dbReference>
<dbReference type="EMBL" id="Y17609">
    <property type="protein sequence ID" value="CAC80055.1"/>
    <property type="molecule type" value="Genomic_DNA"/>
</dbReference>
<dbReference type="EMBL" id="AC005314">
    <property type="protein sequence ID" value="AAC36169.2"/>
    <property type="molecule type" value="Genomic_DNA"/>
</dbReference>
<dbReference type="EMBL" id="CP002685">
    <property type="protein sequence ID" value="AEC09116.1"/>
    <property type="molecule type" value="Genomic_DNA"/>
</dbReference>
<dbReference type="EMBL" id="CP002685">
    <property type="protein sequence ID" value="ANM62783.1"/>
    <property type="molecule type" value="Genomic_DNA"/>
</dbReference>
<dbReference type="EMBL" id="AK119013">
    <property type="protein sequence ID" value="BAC43589.1"/>
    <property type="molecule type" value="mRNA"/>
</dbReference>
<dbReference type="EMBL" id="AY049271">
    <property type="protein sequence ID" value="AAK83613.1"/>
    <property type="molecule type" value="mRNA"/>
</dbReference>
<dbReference type="EMBL" id="AY087959">
    <property type="protein sequence ID" value="AAM65506.1"/>
    <property type="molecule type" value="mRNA"/>
</dbReference>
<dbReference type="PIR" id="F84769">
    <property type="entry name" value="F84769"/>
</dbReference>
<dbReference type="RefSeq" id="NP_001318358.1">
    <molecule id="O22622-1"/>
    <property type="nucleotide sequence ID" value="NM_001336559.1"/>
</dbReference>
<dbReference type="RefSeq" id="NP_565807.1">
    <molecule id="O22622-1"/>
    <property type="nucleotide sequence ID" value="NM_129104.4"/>
</dbReference>
<dbReference type="SMR" id="O22622"/>
<dbReference type="BioGRID" id="3463">
    <property type="interactions" value="63"/>
</dbReference>
<dbReference type="FunCoup" id="O22622">
    <property type="interactions" value="3801"/>
</dbReference>
<dbReference type="IntAct" id="O22622">
    <property type="interactions" value="63"/>
</dbReference>
<dbReference type="STRING" id="3702.O22622"/>
<dbReference type="PaxDb" id="3702-AT2G35520.2"/>
<dbReference type="ProteomicsDB" id="224703">
    <molecule id="O22622-1"/>
</dbReference>
<dbReference type="EnsemblPlants" id="AT2G35520.1">
    <molecule id="O22622-1"/>
    <property type="protein sequence ID" value="AT2G35520.1"/>
    <property type="gene ID" value="AT2G35520"/>
</dbReference>
<dbReference type="EnsemblPlants" id="AT2G35520.3">
    <molecule id="O22622-1"/>
    <property type="protein sequence ID" value="AT2G35520.3"/>
    <property type="gene ID" value="AT2G35520"/>
</dbReference>
<dbReference type="GeneID" id="818117"/>
<dbReference type="Gramene" id="AT2G35520.1">
    <molecule id="O22622-1"/>
    <property type="protein sequence ID" value="AT2G35520.1"/>
    <property type="gene ID" value="AT2G35520"/>
</dbReference>
<dbReference type="Gramene" id="AT2G35520.3">
    <molecule id="O22622-1"/>
    <property type="protein sequence ID" value="AT2G35520.3"/>
    <property type="gene ID" value="AT2G35520"/>
</dbReference>
<dbReference type="KEGG" id="ath:AT2G35520"/>
<dbReference type="Araport" id="AT2G35520"/>
<dbReference type="TAIR" id="AT2G35520">
    <property type="gene designation" value="DAD2"/>
</dbReference>
<dbReference type="eggNOG" id="KOG1746">
    <property type="taxonomic scope" value="Eukaryota"/>
</dbReference>
<dbReference type="InParanoid" id="O22622"/>
<dbReference type="OMA" id="YCCSVGT"/>
<dbReference type="OrthoDB" id="445566at2759"/>
<dbReference type="PhylomeDB" id="O22622"/>
<dbReference type="UniPathway" id="UPA00378"/>
<dbReference type="PRO" id="PR:O22622"/>
<dbReference type="Proteomes" id="UP000006548">
    <property type="component" value="Chromosome 2"/>
</dbReference>
<dbReference type="ExpressionAtlas" id="O22622">
    <property type="expression patterns" value="baseline and differential"/>
</dbReference>
<dbReference type="GO" id="GO:0008250">
    <property type="term" value="C:oligosaccharyltransferase complex"/>
    <property type="evidence" value="ECO:0007669"/>
    <property type="project" value="InterPro"/>
</dbReference>
<dbReference type="GO" id="GO:0006486">
    <property type="term" value="P:protein glycosylation"/>
    <property type="evidence" value="ECO:0007669"/>
    <property type="project" value="UniProtKB-UniPathway"/>
</dbReference>
<dbReference type="InterPro" id="IPR003038">
    <property type="entry name" value="DAD/Ost2"/>
</dbReference>
<dbReference type="PANTHER" id="PTHR10705">
    <property type="entry name" value="DOLICHYL-DIPHOSPHOOLIGOSACCHARIDE--PROTEIN GLYCOSYLTRANSFERASE SUBUNIT DAD1"/>
    <property type="match status" value="1"/>
</dbReference>
<dbReference type="PANTHER" id="PTHR10705:SF0">
    <property type="entry name" value="DOLICHYL-DIPHOSPHOOLIGOSACCHARIDE--PROTEIN GLYCOSYLTRANSFERASE SUBUNIT DAD1"/>
    <property type="match status" value="1"/>
</dbReference>
<dbReference type="Pfam" id="PF02109">
    <property type="entry name" value="DAD"/>
    <property type="match status" value="1"/>
</dbReference>
<dbReference type="PIRSF" id="PIRSF005588">
    <property type="entry name" value="DAD"/>
    <property type="match status" value="1"/>
</dbReference>
<comment type="function">
    <text evidence="2">Subunit of the oligosaccharyl transferase (OST) complex that catalyzes the initial transfer of a defined glycan (Glc(3)Man(9)GlcNAc(2) in eukaryotes) from the lipid carrier dolichol-pyrophosphate to an asparagine residue within an Asn-X-Ser/Thr consensus motif in nascent polypeptide chains, the first step in protein N-glycosylation. N-glycosylation occurs cotranslationally and the complex associates with the Sec61 complex at the channel-forming translocon complex that mediates protein translocation across the endoplasmic reticulum (ER). All subunits are required for a maximal enzyme activity.</text>
</comment>
<comment type="pathway">
    <text>Protein modification; protein glycosylation.</text>
</comment>
<comment type="subunit">
    <text evidence="2">Component of the oligosaccharyltransferase (OST) complex.</text>
</comment>
<comment type="subcellular location">
    <subcellularLocation>
        <location evidence="1">Endoplasmic reticulum membrane</location>
        <topology evidence="1">Multi-pass membrane protein</topology>
    </subcellularLocation>
</comment>
<comment type="alternative products">
    <event type="alternative splicing"/>
    <isoform>
        <id>O22622-1</id>
        <name>1</name>
        <sequence type="displayed"/>
    </isoform>
    <isoform>
        <id>O22622-2</id>
        <name>2</name>
        <sequence type="described" ref="VSP_008913 VSP_008914"/>
    </isoform>
</comment>
<comment type="miscellaneous">
    <molecule>Isoform 2</molecule>
    <text evidence="5">May be due to intron retention.</text>
</comment>
<comment type="similarity">
    <text evidence="5">Belongs to the DAD/OST2 family.</text>
</comment>
<keyword id="KW-0025">Alternative splicing</keyword>
<keyword id="KW-0053">Apoptosis</keyword>
<keyword id="KW-0256">Endoplasmic reticulum</keyword>
<keyword id="KW-0472">Membrane</keyword>
<keyword id="KW-1185">Reference proteome</keyword>
<keyword id="KW-0812">Transmembrane</keyword>
<keyword id="KW-1133">Transmembrane helix</keyword>
<protein>
    <recommendedName>
        <fullName>Dolichyl-diphosphooligosaccharide--protein glycosyltransferase subunit DAD2</fullName>
        <shortName>Oligosaccharyl transferase subunit DAD2</shortName>
    </recommendedName>
    <alternativeName>
        <fullName>Defender against cell death 2</fullName>
        <shortName>AtDAD2</shortName>
        <shortName>DAD-2</shortName>
    </alternativeName>
</protein>
<feature type="chain" id="PRO_0000124020" description="Dolichyl-diphosphooligosaccharide--protein glycosyltransferase subunit DAD2">
    <location>
        <begin position="1"/>
        <end position="115"/>
    </location>
</feature>
<feature type="topological domain" description="Cytoplasmic" evidence="3">
    <location>
        <begin position="1"/>
        <end position="31"/>
    </location>
</feature>
<feature type="transmembrane region" description="Helical" evidence="3">
    <location>
        <begin position="32"/>
        <end position="52"/>
    </location>
</feature>
<feature type="topological domain" description="Lumenal" evidence="3">
    <location>
        <begin position="53"/>
        <end position="55"/>
    </location>
</feature>
<feature type="transmembrane region" description="Helical" evidence="3">
    <location>
        <begin position="56"/>
        <end position="76"/>
    </location>
</feature>
<feature type="topological domain" description="Cytoplasmic" evidence="3">
    <location>
        <begin position="77"/>
        <end position="94"/>
    </location>
</feature>
<feature type="transmembrane region" description="Helical" evidence="3">
    <location>
        <begin position="95"/>
        <end position="115"/>
    </location>
</feature>
<feature type="splice variant" id="VSP_008913" description="In isoform 2." evidence="4">
    <original>IIDLYVCFAVFTALIQVAYMALVGS</original>
    <variation>VHHYHFVLIFYESSLKLKNPLNVLV</variation>
    <location>
        <begin position="29"/>
        <end position="53"/>
    </location>
</feature>
<feature type="splice variant" id="VSP_008914" description="In isoform 2." evidence="4">
    <location>
        <begin position="54"/>
        <end position="115"/>
    </location>
</feature>
<reference key="1">
    <citation type="submission" date="1997-10" db="EMBL/GenBank/DDBJ databases">
        <title>AtDAD2: a new gene from the DAD1 family in Arabidopsis.</title>
        <authorList>
            <person name="Danon A."/>
            <person name="Gallois P."/>
        </authorList>
    </citation>
    <scope>NUCLEOTIDE SEQUENCE [GENOMIC DNA]</scope>
</reference>
<reference key="2">
    <citation type="submission" date="1998-06" db="EMBL/GenBank/DDBJ databases">
        <title>Differential regulation of two types of the defender against apoptotic cell death 1 (dad1) genes in senescing cotyledons and petals of Arabidopsis thaliana.</title>
        <authorList>
            <person name="Sugiura T."/>
            <person name="Naito K."/>
            <person name="Asahi T."/>
            <person name="Suzuki H."/>
        </authorList>
    </citation>
    <scope>NUCLEOTIDE SEQUENCE [GENOMIC DNA]</scope>
    <source>
        <strain>cv. Columbia</strain>
    </source>
</reference>
<reference key="3">
    <citation type="journal article" date="1999" name="Nature">
        <title>Sequence and analysis of chromosome 2 of the plant Arabidopsis thaliana.</title>
        <authorList>
            <person name="Lin X."/>
            <person name="Kaul S."/>
            <person name="Rounsley S.D."/>
            <person name="Shea T.P."/>
            <person name="Benito M.-I."/>
            <person name="Town C.D."/>
            <person name="Fujii C.Y."/>
            <person name="Mason T.M."/>
            <person name="Bowman C.L."/>
            <person name="Barnstead M.E."/>
            <person name="Feldblyum T.V."/>
            <person name="Buell C.R."/>
            <person name="Ketchum K.A."/>
            <person name="Lee J.J."/>
            <person name="Ronning C.M."/>
            <person name="Koo H.L."/>
            <person name="Moffat K.S."/>
            <person name="Cronin L.A."/>
            <person name="Shen M."/>
            <person name="Pai G."/>
            <person name="Van Aken S."/>
            <person name="Umayam L."/>
            <person name="Tallon L.J."/>
            <person name="Gill J.E."/>
            <person name="Adams M.D."/>
            <person name="Carrera A.J."/>
            <person name="Creasy T.H."/>
            <person name="Goodman H.M."/>
            <person name="Somerville C.R."/>
            <person name="Copenhaver G.P."/>
            <person name="Preuss D."/>
            <person name="Nierman W.C."/>
            <person name="White O."/>
            <person name="Eisen J.A."/>
            <person name="Salzberg S.L."/>
            <person name="Fraser C.M."/>
            <person name="Venter J.C."/>
        </authorList>
    </citation>
    <scope>NUCLEOTIDE SEQUENCE [LARGE SCALE GENOMIC DNA]</scope>
    <source>
        <strain>cv. Columbia</strain>
    </source>
</reference>
<reference key="4">
    <citation type="journal article" date="2017" name="Plant J.">
        <title>Araport11: a complete reannotation of the Arabidopsis thaliana reference genome.</title>
        <authorList>
            <person name="Cheng C.Y."/>
            <person name="Krishnakumar V."/>
            <person name="Chan A.P."/>
            <person name="Thibaud-Nissen F."/>
            <person name="Schobel S."/>
            <person name="Town C.D."/>
        </authorList>
    </citation>
    <scope>GENOME REANNOTATION</scope>
    <source>
        <strain>cv. Columbia</strain>
    </source>
</reference>
<reference key="5">
    <citation type="journal article" date="2002" name="Science">
        <title>Functional annotation of a full-length Arabidopsis cDNA collection.</title>
        <authorList>
            <person name="Seki M."/>
            <person name="Narusaka M."/>
            <person name="Kamiya A."/>
            <person name="Ishida J."/>
            <person name="Satou M."/>
            <person name="Sakurai T."/>
            <person name="Nakajima M."/>
            <person name="Enju A."/>
            <person name="Akiyama K."/>
            <person name="Oono Y."/>
            <person name="Muramatsu M."/>
            <person name="Hayashizaki Y."/>
            <person name="Kawai J."/>
            <person name="Carninci P."/>
            <person name="Itoh M."/>
            <person name="Ishii Y."/>
            <person name="Arakawa T."/>
            <person name="Shibata K."/>
            <person name="Shinagawa A."/>
            <person name="Shinozaki K."/>
        </authorList>
    </citation>
    <scope>NUCLEOTIDE SEQUENCE [LARGE SCALE MRNA] (ISOFORM 1)</scope>
    <source>
        <strain>cv. Columbia</strain>
    </source>
</reference>
<reference key="6">
    <citation type="journal article" date="2003" name="Science">
        <title>Empirical analysis of transcriptional activity in the Arabidopsis genome.</title>
        <authorList>
            <person name="Yamada K."/>
            <person name="Lim J."/>
            <person name="Dale J.M."/>
            <person name="Chen H."/>
            <person name="Shinn P."/>
            <person name="Palm C.J."/>
            <person name="Southwick A.M."/>
            <person name="Wu H.C."/>
            <person name="Kim C.J."/>
            <person name="Nguyen M."/>
            <person name="Pham P.K."/>
            <person name="Cheuk R.F."/>
            <person name="Karlin-Newmann G."/>
            <person name="Liu S.X."/>
            <person name="Lam B."/>
            <person name="Sakano H."/>
            <person name="Wu T."/>
            <person name="Yu G."/>
            <person name="Miranda M."/>
            <person name="Quach H.L."/>
            <person name="Tripp M."/>
            <person name="Chang C.H."/>
            <person name="Lee J.M."/>
            <person name="Toriumi M.J."/>
            <person name="Chan M.M."/>
            <person name="Tang C.C."/>
            <person name="Onodera C.S."/>
            <person name="Deng J.M."/>
            <person name="Akiyama K."/>
            <person name="Ansari Y."/>
            <person name="Arakawa T."/>
            <person name="Banh J."/>
            <person name="Banno F."/>
            <person name="Bowser L."/>
            <person name="Brooks S.Y."/>
            <person name="Carninci P."/>
            <person name="Chao Q."/>
            <person name="Choy N."/>
            <person name="Enju A."/>
            <person name="Goldsmith A.D."/>
            <person name="Gurjal M."/>
            <person name="Hansen N.F."/>
            <person name="Hayashizaki Y."/>
            <person name="Johnson-Hopson C."/>
            <person name="Hsuan V.W."/>
            <person name="Iida K."/>
            <person name="Karnes M."/>
            <person name="Khan S."/>
            <person name="Koesema E."/>
            <person name="Ishida J."/>
            <person name="Jiang P.X."/>
            <person name="Jones T."/>
            <person name="Kawai J."/>
            <person name="Kamiya A."/>
            <person name="Meyers C."/>
            <person name="Nakajima M."/>
            <person name="Narusaka M."/>
            <person name="Seki M."/>
            <person name="Sakurai T."/>
            <person name="Satou M."/>
            <person name="Tamse R."/>
            <person name="Vaysberg M."/>
            <person name="Wallender E.K."/>
            <person name="Wong C."/>
            <person name="Yamamura Y."/>
            <person name="Yuan S."/>
            <person name="Shinozaki K."/>
            <person name="Davis R.W."/>
            <person name="Theologis A."/>
            <person name="Ecker J.R."/>
        </authorList>
    </citation>
    <scope>NUCLEOTIDE SEQUENCE [LARGE SCALE MRNA] (ISOFORM 2)</scope>
    <source>
        <strain>cv. Columbia</strain>
    </source>
</reference>
<reference key="7">
    <citation type="submission" date="2002-03" db="EMBL/GenBank/DDBJ databases">
        <title>Full-length cDNA from Arabidopsis thaliana.</title>
        <authorList>
            <person name="Brover V.V."/>
            <person name="Troukhan M.E."/>
            <person name="Alexandrov N.A."/>
            <person name="Lu Y.-P."/>
            <person name="Flavell R.B."/>
            <person name="Feldmann K.A."/>
        </authorList>
    </citation>
    <scope>NUCLEOTIDE SEQUENCE [LARGE SCALE MRNA] (ISOFORM 1)</scope>
</reference>
<sequence>MVKSTSKDAQDLFHSLHSAYTATPTNLKIIDLYVCFAVFTALIQVAYMALVGSFPFNSFLSGVLSCIGTAVLAVCLRIQVNKENKEFKDLAPERAFADFVLCNLVLHLVIINFLG</sequence>
<accession>O22622</accession>
<accession>Q94A89</accession>
<accession>Q9SLH6</accession>
<organism>
    <name type="scientific">Arabidopsis thaliana</name>
    <name type="common">Mouse-ear cress</name>
    <dbReference type="NCBI Taxonomy" id="3702"/>
    <lineage>
        <taxon>Eukaryota</taxon>
        <taxon>Viridiplantae</taxon>
        <taxon>Streptophyta</taxon>
        <taxon>Embryophyta</taxon>
        <taxon>Tracheophyta</taxon>
        <taxon>Spermatophyta</taxon>
        <taxon>Magnoliopsida</taxon>
        <taxon>eudicotyledons</taxon>
        <taxon>Gunneridae</taxon>
        <taxon>Pentapetalae</taxon>
        <taxon>rosids</taxon>
        <taxon>malvids</taxon>
        <taxon>Brassicales</taxon>
        <taxon>Brassicaceae</taxon>
        <taxon>Camelineae</taxon>
        <taxon>Arabidopsis</taxon>
    </lineage>
</organism>
<proteinExistence type="inferred from homology"/>